<comment type="function">
    <text evidence="1">Catalyzes the NADPH-dependent rearrangement and reduction of 1-deoxy-D-xylulose-5-phosphate (DXP) to 2-C-methyl-D-erythritol 4-phosphate (MEP).</text>
</comment>
<comment type="catalytic activity">
    <reaction evidence="1">
        <text>2-C-methyl-D-erythritol 4-phosphate + NADP(+) = 1-deoxy-D-xylulose 5-phosphate + NADPH + H(+)</text>
        <dbReference type="Rhea" id="RHEA:13717"/>
        <dbReference type="ChEBI" id="CHEBI:15378"/>
        <dbReference type="ChEBI" id="CHEBI:57783"/>
        <dbReference type="ChEBI" id="CHEBI:57792"/>
        <dbReference type="ChEBI" id="CHEBI:58262"/>
        <dbReference type="ChEBI" id="CHEBI:58349"/>
        <dbReference type="EC" id="1.1.1.267"/>
    </reaction>
    <physiologicalReaction direction="right-to-left" evidence="1">
        <dbReference type="Rhea" id="RHEA:13719"/>
    </physiologicalReaction>
</comment>
<comment type="cofactor">
    <cofactor evidence="1">
        <name>Mg(2+)</name>
        <dbReference type="ChEBI" id="CHEBI:18420"/>
    </cofactor>
    <cofactor evidence="1">
        <name>Mn(2+)</name>
        <dbReference type="ChEBI" id="CHEBI:29035"/>
    </cofactor>
</comment>
<comment type="pathway">
    <text evidence="1">Isoprenoid biosynthesis; isopentenyl diphosphate biosynthesis via DXP pathway; isopentenyl diphosphate from 1-deoxy-D-xylulose 5-phosphate: step 1/6.</text>
</comment>
<comment type="similarity">
    <text evidence="1">Belongs to the DXR family.</text>
</comment>
<protein>
    <recommendedName>
        <fullName evidence="1">1-deoxy-D-xylulose 5-phosphate reductoisomerase</fullName>
        <shortName evidence="1">DXP reductoisomerase</shortName>
        <ecNumber evidence="1">1.1.1.267</ecNumber>
    </recommendedName>
    <alternativeName>
        <fullName evidence="1">1-deoxyxylulose-5-phosphate reductoisomerase</fullName>
    </alternativeName>
    <alternativeName>
        <fullName evidence="1">2-C-methyl-D-erythritol 4-phosphate synthase</fullName>
    </alternativeName>
</protein>
<feature type="chain" id="PRO_1000020251" description="1-deoxy-D-xylulose 5-phosphate reductoisomerase">
    <location>
        <begin position="1"/>
        <end position="384"/>
    </location>
</feature>
<feature type="binding site" evidence="1">
    <location>
        <position position="10"/>
    </location>
    <ligand>
        <name>NADPH</name>
        <dbReference type="ChEBI" id="CHEBI:57783"/>
    </ligand>
</feature>
<feature type="binding site" evidence="1">
    <location>
        <position position="11"/>
    </location>
    <ligand>
        <name>NADPH</name>
        <dbReference type="ChEBI" id="CHEBI:57783"/>
    </ligand>
</feature>
<feature type="binding site" evidence="1">
    <location>
        <position position="12"/>
    </location>
    <ligand>
        <name>NADPH</name>
        <dbReference type="ChEBI" id="CHEBI:57783"/>
    </ligand>
</feature>
<feature type="binding site" evidence="1">
    <location>
        <position position="13"/>
    </location>
    <ligand>
        <name>NADPH</name>
        <dbReference type="ChEBI" id="CHEBI:57783"/>
    </ligand>
</feature>
<feature type="binding site" evidence="1">
    <location>
        <position position="37"/>
    </location>
    <ligand>
        <name>NADPH</name>
        <dbReference type="ChEBI" id="CHEBI:57783"/>
    </ligand>
</feature>
<feature type="binding site" evidence="1">
    <location>
        <position position="38"/>
    </location>
    <ligand>
        <name>NADPH</name>
        <dbReference type="ChEBI" id="CHEBI:57783"/>
    </ligand>
</feature>
<feature type="binding site" evidence="1">
    <location>
        <position position="124"/>
    </location>
    <ligand>
        <name>NADPH</name>
        <dbReference type="ChEBI" id="CHEBI:57783"/>
    </ligand>
</feature>
<feature type="binding site" evidence="1">
    <location>
        <position position="125"/>
    </location>
    <ligand>
        <name>1-deoxy-D-xylulose 5-phosphate</name>
        <dbReference type="ChEBI" id="CHEBI:57792"/>
    </ligand>
</feature>
<feature type="binding site" evidence="1">
    <location>
        <position position="126"/>
    </location>
    <ligand>
        <name>NADPH</name>
        <dbReference type="ChEBI" id="CHEBI:57783"/>
    </ligand>
</feature>
<feature type="binding site" evidence="1">
    <location>
        <position position="150"/>
    </location>
    <ligand>
        <name>Mn(2+)</name>
        <dbReference type="ChEBI" id="CHEBI:29035"/>
    </ligand>
</feature>
<feature type="binding site" evidence="1">
    <location>
        <position position="151"/>
    </location>
    <ligand>
        <name>1-deoxy-D-xylulose 5-phosphate</name>
        <dbReference type="ChEBI" id="CHEBI:57792"/>
    </ligand>
</feature>
<feature type="binding site" evidence="1">
    <location>
        <position position="152"/>
    </location>
    <ligand>
        <name>1-deoxy-D-xylulose 5-phosphate</name>
        <dbReference type="ChEBI" id="CHEBI:57792"/>
    </ligand>
</feature>
<feature type="binding site" evidence="1">
    <location>
        <position position="152"/>
    </location>
    <ligand>
        <name>Mn(2+)</name>
        <dbReference type="ChEBI" id="CHEBI:29035"/>
    </ligand>
</feature>
<feature type="binding site" evidence="1">
    <location>
        <position position="176"/>
    </location>
    <ligand>
        <name>1-deoxy-D-xylulose 5-phosphate</name>
        <dbReference type="ChEBI" id="CHEBI:57792"/>
    </ligand>
</feature>
<feature type="binding site" evidence="1">
    <location>
        <position position="199"/>
    </location>
    <ligand>
        <name>1-deoxy-D-xylulose 5-phosphate</name>
        <dbReference type="ChEBI" id="CHEBI:57792"/>
    </ligand>
</feature>
<feature type="binding site" evidence="1">
    <location>
        <position position="205"/>
    </location>
    <ligand>
        <name>NADPH</name>
        <dbReference type="ChEBI" id="CHEBI:57783"/>
    </ligand>
</feature>
<feature type="binding site" evidence="1">
    <location>
        <position position="212"/>
    </location>
    <ligand>
        <name>1-deoxy-D-xylulose 5-phosphate</name>
        <dbReference type="ChEBI" id="CHEBI:57792"/>
    </ligand>
</feature>
<feature type="binding site" evidence="1">
    <location>
        <position position="217"/>
    </location>
    <ligand>
        <name>1-deoxy-D-xylulose 5-phosphate</name>
        <dbReference type="ChEBI" id="CHEBI:57792"/>
    </ligand>
</feature>
<feature type="binding site" evidence="1">
    <location>
        <position position="218"/>
    </location>
    <ligand>
        <name>1-deoxy-D-xylulose 5-phosphate</name>
        <dbReference type="ChEBI" id="CHEBI:57792"/>
    </ligand>
</feature>
<feature type="binding site" evidence="1">
    <location>
        <position position="221"/>
    </location>
    <ligand>
        <name>1-deoxy-D-xylulose 5-phosphate</name>
        <dbReference type="ChEBI" id="CHEBI:57792"/>
    </ligand>
</feature>
<feature type="binding site" evidence="1">
    <location>
        <position position="221"/>
    </location>
    <ligand>
        <name>Mn(2+)</name>
        <dbReference type="ChEBI" id="CHEBI:29035"/>
    </ligand>
</feature>
<sequence length="384" mass="43270">MKRISILGVTGSIGTQTLDVLRFHKEDFELVGITANRNIELTMDIIKEFSPKYVAINHEESYKKLVDLVKSQGLKCEVIYGMEGLVKVATLDEIDIVVTSVVGMIGLKPTVEAIRKGKDIALANKETLVVAGELVMREAKENGVKILPVDSEHSAIFQSLQGNAHNKIDKILLTASGGPFRGFTIEDLKSVTPERALKHPKWNMGQKISIDSSTLMNKGLEVIEAHWLFDCPYKDIEVVVHPQSIIHSMVQYTDGAVIAQLGVPDMKLPIQYALNYPNRQGNISEKLDLFKIRELTFEKPDLDTFKCLKLAYEAGEKGKLMPTILNGANEVCVELFLNKKITYLQIPEIIEECMNTFDYNKEVTLHNVINLDKEVRQYIYEKYN</sequence>
<dbReference type="EC" id="1.1.1.267" evidence="1"/>
<dbReference type="EMBL" id="CP000246">
    <property type="protein sequence ID" value="ABG82870.1"/>
    <property type="molecule type" value="Genomic_DNA"/>
</dbReference>
<dbReference type="RefSeq" id="WP_003459741.1">
    <property type="nucleotide sequence ID" value="NC_008261.1"/>
</dbReference>
<dbReference type="SMR" id="Q0TPQ9"/>
<dbReference type="STRING" id="195103.CPF_1948"/>
<dbReference type="PaxDb" id="195103-CPF_1948"/>
<dbReference type="GeneID" id="93001768"/>
<dbReference type="KEGG" id="cpf:CPF_1948"/>
<dbReference type="eggNOG" id="COG0743">
    <property type="taxonomic scope" value="Bacteria"/>
</dbReference>
<dbReference type="HOGENOM" id="CLU_035714_4_0_9"/>
<dbReference type="UniPathway" id="UPA00056">
    <property type="reaction ID" value="UER00092"/>
</dbReference>
<dbReference type="Proteomes" id="UP000001823">
    <property type="component" value="Chromosome"/>
</dbReference>
<dbReference type="GO" id="GO:0030604">
    <property type="term" value="F:1-deoxy-D-xylulose-5-phosphate reductoisomerase activity"/>
    <property type="evidence" value="ECO:0007669"/>
    <property type="project" value="UniProtKB-UniRule"/>
</dbReference>
<dbReference type="GO" id="GO:0030145">
    <property type="term" value="F:manganese ion binding"/>
    <property type="evidence" value="ECO:0007669"/>
    <property type="project" value="TreeGrafter"/>
</dbReference>
<dbReference type="GO" id="GO:0070402">
    <property type="term" value="F:NADPH binding"/>
    <property type="evidence" value="ECO:0007669"/>
    <property type="project" value="InterPro"/>
</dbReference>
<dbReference type="GO" id="GO:0051484">
    <property type="term" value="P:isopentenyl diphosphate biosynthetic process, methylerythritol 4-phosphate pathway involved in terpenoid biosynthetic process"/>
    <property type="evidence" value="ECO:0007669"/>
    <property type="project" value="TreeGrafter"/>
</dbReference>
<dbReference type="FunFam" id="3.40.50.720:FF:000045">
    <property type="entry name" value="1-deoxy-D-xylulose 5-phosphate reductoisomerase"/>
    <property type="match status" value="1"/>
</dbReference>
<dbReference type="Gene3D" id="1.10.1740.10">
    <property type="match status" value="1"/>
</dbReference>
<dbReference type="Gene3D" id="3.40.50.720">
    <property type="entry name" value="NAD(P)-binding Rossmann-like Domain"/>
    <property type="match status" value="1"/>
</dbReference>
<dbReference type="HAMAP" id="MF_00183">
    <property type="entry name" value="DXP_reductoisom"/>
    <property type="match status" value="1"/>
</dbReference>
<dbReference type="InterPro" id="IPR003821">
    <property type="entry name" value="DXP_reductoisomerase"/>
</dbReference>
<dbReference type="InterPro" id="IPR013644">
    <property type="entry name" value="DXP_reductoisomerase_C"/>
</dbReference>
<dbReference type="InterPro" id="IPR013512">
    <property type="entry name" value="DXP_reductoisomerase_N"/>
</dbReference>
<dbReference type="InterPro" id="IPR026877">
    <property type="entry name" value="DXPR_C"/>
</dbReference>
<dbReference type="InterPro" id="IPR036169">
    <property type="entry name" value="DXPR_C_sf"/>
</dbReference>
<dbReference type="InterPro" id="IPR036291">
    <property type="entry name" value="NAD(P)-bd_dom_sf"/>
</dbReference>
<dbReference type="NCBIfam" id="TIGR00243">
    <property type="entry name" value="Dxr"/>
    <property type="match status" value="1"/>
</dbReference>
<dbReference type="NCBIfam" id="NF009114">
    <property type="entry name" value="PRK12464.1"/>
    <property type="match status" value="1"/>
</dbReference>
<dbReference type="PANTHER" id="PTHR30525">
    <property type="entry name" value="1-DEOXY-D-XYLULOSE 5-PHOSPHATE REDUCTOISOMERASE"/>
    <property type="match status" value="1"/>
</dbReference>
<dbReference type="PANTHER" id="PTHR30525:SF0">
    <property type="entry name" value="1-DEOXY-D-XYLULOSE 5-PHOSPHATE REDUCTOISOMERASE, CHLOROPLASTIC"/>
    <property type="match status" value="1"/>
</dbReference>
<dbReference type="Pfam" id="PF08436">
    <property type="entry name" value="DXP_redisom_C"/>
    <property type="match status" value="1"/>
</dbReference>
<dbReference type="Pfam" id="PF02670">
    <property type="entry name" value="DXP_reductoisom"/>
    <property type="match status" value="1"/>
</dbReference>
<dbReference type="Pfam" id="PF13288">
    <property type="entry name" value="DXPR_C"/>
    <property type="match status" value="1"/>
</dbReference>
<dbReference type="PIRSF" id="PIRSF006205">
    <property type="entry name" value="Dxp_reductismrs"/>
    <property type="match status" value="1"/>
</dbReference>
<dbReference type="SUPFAM" id="SSF69055">
    <property type="entry name" value="1-deoxy-D-xylulose-5-phosphate reductoisomerase, C-terminal domain"/>
    <property type="match status" value="1"/>
</dbReference>
<dbReference type="SUPFAM" id="SSF55347">
    <property type="entry name" value="Glyceraldehyde-3-phosphate dehydrogenase-like, C-terminal domain"/>
    <property type="match status" value="1"/>
</dbReference>
<dbReference type="SUPFAM" id="SSF51735">
    <property type="entry name" value="NAD(P)-binding Rossmann-fold domains"/>
    <property type="match status" value="1"/>
</dbReference>
<organism>
    <name type="scientific">Clostridium perfringens (strain ATCC 13124 / DSM 756 / JCM 1290 / NCIMB 6125 / NCTC 8237 / Type A)</name>
    <dbReference type="NCBI Taxonomy" id="195103"/>
    <lineage>
        <taxon>Bacteria</taxon>
        <taxon>Bacillati</taxon>
        <taxon>Bacillota</taxon>
        <taxon>Clostridia</taxon>
        <taxon>Eubacteriales</taxon>
        <taxon>Clostridiaceae</taxon>
        <taxon>Clostridium</taxon>
    </lineage>
</organism>
<keyword id="KW-0414">Isoprene biosynthesis</keyword>
<keyword id="KW-0464">Manganese</keyword>
<keyword id="KW-0479">Metal-binding</keyword>
<keyword id="KW-0521">NADP</keyword>
<keyword id="KW-0560">Oxidoreductase</keyword>
<reference key="1">
    <citation type="journal article" date="2006" name="Genome Res.">
        <title>Skewed genomic variability in strains of the toxigenic bacterial pathogen, Clostridium perfringens.</title>
        <authorList>
            <person name="Myers G.S.A."/>
            <person name="Rasko D.A."/>
            <person name="Cheung J.K."/>
            <person name="Ravel J."/>
            <person name="Seshadri R."/>
            <person name="DeBoy R.T."/>
            <person name="Ren Q."/>
            <person name="Varga J."/>
            <person name="Awad M.M."/>
            <person name="Brinkac L.M."/>
            <person name="Daugherty S.C."/>
            <person name="Haft D.H."/>
            <person name="Dodson R.J."/>
            <person name="Madupu R."/>
            <person name="Nelson W.C."/>
            <person name="Rosovitz M.J."/>
            <person name="Sullivan S.A."/>
            <person name="Khouri H."/>
            <person name="Dimitrov G.I."/>
            <person name="Watkins K.L."/>
            <person name="Mulligan S."/>
            <person name="Benton J."/>
            <person name="Radune D."/>
            <person name="Fisher D.J."/>
            <person name="Atkins H.S."/>
            <person name="Hiscox T."/>
            <person name="Jost B.H."/>
            <person name="Billington S.J."/>
            <person name="Songer J.G."/>
            <person name="McClane B.A."/>
            <person name="Titball R.W."/>
            <person name="Rood J.I."/>
            <person name="Melville S.B."/>
            <person name="Paulsen I.T."/>
        </authorList>
    </citation>
    <scope>NUCLEOTIDE SEQUENCE [LARGE SCALE GENOMIC DNA]</scope>
    <source>
        <strain>ATCC 13124 / DSM 756 / JCM 1290 / NCIMB 6125 / NCTC 8237 / S 107 / Type A</strain>
    </source>
</reference>
<gene>
    <name evidence="1" type="primary">dxr</name>
    <name type="ordered locus">CPF_1948</name>
</gene>
<accession>Q0TPQ9</accession>
<evidence type="ECO:0000255" key="1">
    <source>
        <dbReference type="HAMAP-Rule" id="MF_00183"/>
    </source>
</evidence>
<proteinExistence type="inferred from homology"/>
<name>DXR_CLOP1</name>